<proteinExistence type="inferred from homology"/>
<comment type="function">
    <text evidence="1">With S4 and S12 plays an important role in translational accuracy.</text>
</comment>
<comment type="function">
    <text evidence="1">Located at the back of the 30S subunit body where it stabilizes the conformation of the head with respect to the body.</text>
</comment>
<comment type="subunit">
    <text evidence="1">Part of the 30S ribosomal subunit. Contacts proteins S4 and S8.</text>
</comment>
<comment type="domain">
    <text>The N-terminal domain interacts with the head of the 30S subunit; the C-terminal domain interacts with the body and contacts protein S4. The interaction surface between S4 and S5 is involved in control of translational fidelity.</text>
</comment>
<comment type="similarity">
    <text evidence="1">Belongs to the universal ribosomal protein uS5 family.</text>
</comment>
<keyword id="KW-1185">Reference proteome</keyword>
<keyword id="KW-0687">Ribonucleoprotein</keyword>
<keyword id="KW-0689">Ribosomal protein</keyword>
<keyword id="KW-0694">RNA-binding</keyword>
<keyword id="KW-0699">rRNA-binding</keyword>
<evidence type="ECO:0000255" key="1">
    <source>
        <dbReference type="HAMAP-Rule" id="MF_01307"/>
    </source>
</evidence>
<evidence type="ECO:0000256" key="2">
    <source>
        <dbReference type="SAM" id="MobiDB-lite"/>
    </source>
</evidence>
<evidence type="ECO:0000305" key="3"/>
<accession>Q6NJ85</accession>
<sequence>MPGRERRDGGRSADDNQKKNDRRGGRRDDRRNQQQDERSQYIERVVTINRVSKVVKGGRRFSFTALVIVGDGKGMVGVGYGKAKEVPAAIQKGAEEARKNFFRVPMVAGTITHPVQGEAAAGIVMMRPAAPGTGVIAGGAARPVLECAGVQDILCKSLGSDNAINVVHATVAGLKQLNRPEEVAARRGKTLEEVAPARMLRARAGQEA</sequence>
<organism>
    <name type="scientific">Corynebacterium diphtheriae (strain ATCC 700971 / NCTC 13129 / Biotype gravis)</name>
    <dbReference type="NCBI Taxonomy" id="257309"/>
    <lineage>
        <taxon>Bacteria</taxon>
        <taxon>Bacillati</taxon>
        <taxon>Actinomycetota</taxon>
        <taxon>Actinomycetes</taxon>
        <taxon>Mycobacteriales</taxon>
        <taxon>Corynebacteriaceae</taxon>
        <taxon>Corynebacterium</taxon>
    </lineage>
</organism>
<protein>
    <recommendedName>
        <fullName evidence="1">Small ribosomal subunit protein uS5</fullName>
    </recommendedName>
    <alternativeName>
        <fullName evidence="3">30S ribosomal protein S5</fullName>
    </alternativeName>
</protein>
<dbReference type="EMBL" id="BX248355">
    <property type="protein sequence ID" value="CAE49038.1"/>
    <property type="molecule type" value="Genomic_DNA"/>
</dbReference>
<dbReference type="RefSeq" id="WP_004566825.1">
    <property type="nucleotide sequence ID" value="NC_002935.2"/>
</dbReference>
<dbReference type="SMR" id="Q6NJ85"/>
<dbReference type="STRING" id="257309.DIP0527"/>
<dbReference type="GeneID" id="29422274"/>
<dbReference type="KEGG" id="cdi:DIP0527"/>
<dbReference type="HOGENOM" id="CLU_065898_1_0_11"/>
<dbReference type="Proteomes" id="UP000002198">
    <property type="component" value="Chromosome"/>
</dbReference>
<dbReference type="GO" id="GO:0015935">
    <property type="term" value="C:small ribosomal subunit"/>
    <property type="evidence" value="ECO:0007669"/>
    <property type="project" value="InterPro"/>
</dbReference>
<dbReference type="GO" id="GO:0019843">
    <property type="term" value="F:rRNA binding"/>
    <property type="evidence" value="ECO:0007669"/>
    <property type="project" value="UniProtKB-UniRule"/>
</dbReference>
<dbReference type="GO" id="GO:0003735">
    <property type="term" value="F:structural constituent of ribosome"/>
    <property type="evidence" value="ECO:0007669"/>
    <property type="project" value="InterPro"/>
</dbReference>
<dbReference type="GO" id="GO:0006412">
    <property type="term" value="P:translation"/>
    <property type="evidence" value="ECO:0007669"/>
    <property type="project" value="UniProtKB-UniRule"/>
</dbReference>
<dbReference type="FunFam" id="3.30.160.20:FF:000001">
    <property type="entry name" value="30S ribosomal protein S5"/>
    <property type="match status" value="1"/>
</dbReference>
<dbReference type="FunFam" id="3.30.230.10:FF:000002">
    <property type="entry name" value="30S ribosomal protein S5"/>
    <property type="match status" value="1"/>
</dbReference>
<dbReference type="Gene3D" id="3.30.160.20">
    <property type="match status" value="1"/>
</dbReference>
<dbReference type="Gene3D" id="3.30.230.10">
    <property type="match status" value="1"/>
</dbReference>
<dbReference type="HAMAP" id="MF_01307_B">
    <property type="entry name" value="Ribosomal_uS5_B"/>
    <property type="match status" value="1"/>
</dbReference>
<dbReference type="InterPro" id="IPR020568">
    <property type="entry name" value="Ribosomal_Su5_D2-typ_SF"/>
</dbReference>
<dbReference type="InterPro" id="IPR000851">
    <property type="entry name" value="Ribosomal_uS5"/>
</dbReference>
<dbReference type="InterPro" id="IPR005712">
    <property type="entry name" value="Ribosomal_uS5_bac-type"/>
</dbReference>
<dbReference type="InterPro" id="IPR005324">
    <property type="entry name" value="Ribosomal_uS5_C"/>
</dbReference>
<dbReference type="InterPro" id="IPR013810">
    <property type="entry name" value="Ribosomal_uS5_N"/>
</dbReference>
<dbReference type="InterPro" id="IPR018192">
    <property type="entry name" value="Ribosomal_uS5_N_CS"/>
</dbReference>
<dbReference type="InterPro" id="IPR014721">
    <property type="entry name" value="Ribsml_uS5_D2-typ_fold_subgr"/>
</dbReference>
<dbReference type="NCBIfam" id="TIGR01021">
    <property type="entry name" value="rpsE_bact"/>
    <property type="match status" value="1"/>
</dbReference>
<dbReference type="PANTHER" id="PTHR48277">
    <property type="entry name" value="MITOCHONDRIAL RIBOSOMAL PROTEIN S5"/>
    <property type="match status" value="1"/>
</dbReference>
<dbReference type="PANTHER" id="PTHR48277:SF1">
    <property type="entry name" value="MITOCHONDRIAL RIBOSOMAL PROTEIN S5"/>
    <property type="match status" value="1"/>
</dbReference>
<dbReference type="Pfam" id="PF00333">
    <property type="entry name" value="Ribosomal_S5"/>
    <property type="match status" value="1"/>
</dbReference>
<dbReference type="Pfam" id="PF03719">
    <property type="entry name" value="Ribosomal_S5_C"/>
    <property type="match status" value="1"/>
</dbReference>
<dbReference type="SUPFAM" id="SSF54768">
    <property type="entry name" value="dsRNA-binding domain-like"/>
    <property type="match status" value="1"/>
</dbReference>
<dbReference type="SUPFAM" id="SSF54211">
    <property type="entry name" value="Ribosomal protein S5 domain 2-like"/>
    <property type="match status" value="1"/>
</dbReference>
<dbReference type="PROSITE" id="PS00585">
    <property type="entry name" value="RIBOSOMAL_S5"/>
    <property type="match status" value="1"/>
</dbReference>
<dbReference type="PROSITE" id="PS50881">
    <property type="entry name" value="S5_DSRBD"/>
    <property type="match status" value="1"/>
</dbReference>
<name>RS5_CORDI</name>
<gene>
    <name evidence="1" type="primary">rpsE</name>
    <name type="ordered locus">DIP0527</name>
</gene>
<reference key="1">
    <citation type="journal article" date="2003" name="Nucleic Acids Res.">
        <title>The complete genome sequence and analysis of Corynebacterium diphtheriae NCTC13129.</title>
        <authorList>
            <person name="Cerdeno-Tarraga A.-M."/>
            <person name="Efstratiou A."/>
            <person name="Dover L.G."/>
            <person name="Holden M.T.G."/>
            <person name="Pallen M.J."/>
            <person name="Bentley S.D."/>
            <person name="Besra G.S."/>
            <person name="Churcher C.M."/>
            <person name="James K.D."/>
            <person name="De Zoysa A."/>
            <person name="Chillingworth T."/>
            <person name="Cronin A."/>
            <person name="Dowd L."/>
            <person name="Feltwell T."/>
            <person name="Hamlin N."/>
            <person name="Holroyd S."/>
            <person name="Jagels K."/>
            <person name="Moule S."/>
            <person name="Quail M.A."/>
            <person name="Rabbinowitsch E."/>
            <person name="Rutherford K.M."/>
            <person name="Thomson N.R."/>
            <person name="Unwin L."/>
            <person name="Whitehead S."/>
            <person name="Barrell B.G."/>
            <person name="Parkhill J."/>
        </authorList>
    </citation>
    <scope>NUCLEOTIDE SEQUENCE [LARGE SCALE GENOMIC DNA]</scope>
    <source>
        <strain>ATCC 700971 / NCTC 13129 / Biotype gravis</strain>
    </source>
</reference>
<feature type="chain" id="PRO_0000131504" description="Small ribosomal subunit protein uS5">
    <location>
        <begin position="1"/>
        <end position="208"/>
    </location>
</feature>
<feature type="domain" description="S5 DRBM" evidence="1">
    <location>
        <begin position="41"/>
        <end position="104"/>
    </location>
</feature>
<feature type="region of interest" description="Disordered" evidence="2">
    <location>
        <begin position="1"/>
        <end position="38"/>
    </location>
</feature>